<keyword id="KW-0150">Chloroplast</keyword>
<keyword id="KW-0311">Gluconate utilization</keyword>
<keyword id="KW-0521">NADP</keyword>
<keyword id="KW-0560">Oxidoreductase</keyword>
<keyword id="KW-0570">Pentose shunt</keyword>
<keyword id="KW-0934">Plastid</keyword>
<keyword id="KW-1185">Reference proteome</keyword>
<keyword id="KW-0809">Transit peptide</keyword>
<gene>
    <name type="primary">G6PGH2</name>
    <name type="ordered locus">Os11g0484500</name>
    <name type="ordered locus">LOC_Os11g29400</name>
</gene>
<feature type="transit peptide" description="Chloroplast" evidence="2">
    <location>
        <begin position="1"/>
        <end position="12"/>
    </location>
</feature>
<feature type="chain" id="PRO_0000421102" description="6-phosphogluconate dehydrogenase, decarboxylating 2, chloroplastic">
    <location>
        <begin position="13"/>
        <end position="508"/>
    </location>
</feature>
<feature type="active site" description="Proton acceptor" evidence="1">
    <location>
        <position position="203"/>
    </location>
</feature>
<feature type="active site" description="Proton donor" evidence="1">
    <location>
        <position position="210"/>
    </location>
</feature>
<feature type="binding site" evidence="1">
    <location>
        <begin position="28"/>
        <end position="33"/>
    </location>
    <ligand>
        <name>NADP(+)</name>
        <dbReference type="ChEBI" id="CHEBI:58349"/>
    </ligand>
</feature>
<feature type="binding site" evidence="1">
    <location>
        <begin position="51"/>
        <end position="53"/>
    </location>
    <ligand>
        <name>NADP(+)</name>
        <dbReference type="ChEBI" id="CHEBI:58349"/>
    </ligand>
</feature>
<feature type="binding site" evidence="1">
    <location>
        <begin position="95"/>
        <end position="97"/>
    </location>
    <ligand>
        <name>NADP(+)</name>
        <dbReference type="ChEBI" id="CHEBI:58349"/>
    </ligand>
</feature>
<feature type="binding site" evidence="1">
    <location>
        <position position="123"/>
    </location>
    <ligand>
        <name>NADP(+)</name>
        <dbReference type="ChEBI" id="CHEBI:58349"/>
    </ligand>
</feature>
<feature type="binding site" description="in other chain" evidence="1">
    <location>
        <position position="123"/>
    </location>
    <ligand>
        <name>substrate</name>
        <note>ligand shared between dimeric partners</note>
    </ligand>
</feature>
<feature type="binding site" description="in other chain" evidence="1">
    <location>
        <begin position="149"/>
        <end position="151"/>
    </location>
    <ligand>
        <name>substrate</name>
        <note>ligand shared between dimeric partners</note>
    </ligand>
</feature>
<feature type="binding site" description="in other chain" evidence="1">
    <location>
        <begin position="206"/>
        <end position="207"/>
    </location>
    <ligand>
        <name>substrate</name>
        <note>ligand shared between dimeric partners</note>
    </ligand>
</feature>
<feature type="binding site" description="in other chain" evidence="1">
    <location>
        <position position="211"/>
    </location>
    <ligand>
        <name>substrate</name>
        <note>ligand shared between dimeric partners</note>
    </ligand>
</feature>
<feature type="binding site" description="in other chain" evidence="1">
    <location>
        <position position="284"/>
    </location>
    <ligand>
        <name>substrate</name>
        <note>ligand shared between dimeric partners</note>
    </ligand>
</feature>
<feature type="binding site" description="in other chain" evidence="1">
    <location>
        <position position="311"/>
    </location>
    <ligand>
        <name>substrate</name>
        <note>ligand shared between dimeric partners</note>
    </ligand>
</feature>
<feature type="binding site" evidence="1">
    <location>
        <position position="475"/>
    </location>
    <ligand>
        <name>substrate</name>
        <note>ligand shared between dimeric partners</note>
    </ligand>
</feature>
<feature type="binding site" evidence="1">
    <location>
        <position position="481"/>
    </location>
    <ligand>
        <name>substrate</name>
        <note>ligand shared between dimeric partners</note>
    </ligand>
</feature>
<feature type="sequence conflict" description="In Ref. 6; AAP33506." evidence="4" ref="6">
    <original>N</original>
    <variation>K</variation>
    <location>
        <position position="35"/>
    </location>
</feature>
<feature type="sequence conflict" description="In Ref. 6; AAP33506." evidence="4" ref="6">
    <original>E</original>
    <variation>K</variation>
    <location>
        <position position="328"/>
    </location>
</feature>
<feature type="sequence conflict" description="In Ref. 5; AK071592." evidence="4" ref="5">
    <original>S</original>
    <variation>T</variation>
    <location>
        <position position="503"/>
    </location>
</feature>
<name>6PGD2_ORYSJ</name>
<organism>
    <name type="scientific">Oryza sativa subsp. japonica</name>
    <name type="common">Rice</name>
    <dbReference type="NCBI Taxonomy" id="39947"/>
    <lineage>
        <taxon>Eukaryota</taxon>
        <taxon>Viridiplantae</taxon>
        <taxon>Streptophyta</taxon>
        <taxon>Embryophyta</taxon>
        <taxon>Tracheophyta</taxon>
        <taxon>Spermatophyta</taxon>
        <taxon>Magnoliopsida</taxon>
        <taxon>Liliopsida</taxon>
        <taxon>Poales</taxon>
        <taxon>Poaceae</taxon>
        <taxon>BOP clade</taxon>
        <taxon>Oryzoideae</taxon>
        <taxon>Oryzeae</taxon>
        <taxon>Oryzinae</taxon>
        <taxon>Oryza</taxon>
        <taxon>Oryza sativa</taxon>
    </lineage>
</organism>
<accession>Q2R480</accession>
<accession>A0A0P0Y2I7</accession>
<accession>Q7Y248</accession>
<comment type="function">
    <text evidence="1">Catalyzes the oxidative decarboxylation of 6-phosphogluconate to ribulose 5-phosphate and CO(2), with concomitant reduction of NADP to NADPH.</text>
</comment>
<comment type="catalytic activity">
    <reaction>
        <text>6-phospho-D-gluconate + NADP(+) = D-ribulose 5-phosphate + CO2 + NADPH</text>
        <dbReference type="Rhea" id="RHEA:10116"/>
        <dbReference type="ChEBI" id="CHEBI:16526"/>
        <dbReference type="ChEBI" id="CHEBI:57783"/>
        <dbReference type="ChEBI" id="CHEBI:58121"/>
        <dbReference type="ChEBI" id="CHEBI:58349"/>
        <dbReference type="ChEBI" id="CHEBI:58759"/>
        <dbReference type="EC" id="1.1.1.44"/>
    </reaction>
</comment>
<comment type="pathway">
    <text>Carbohydrate degradation; pentose phosphate pathway; D-ribulose 5-phosphate from D-glucose 6-phosphate (oxidative stage): step 3/3.</text>
</comment>
<comment type="subunit">
    <text evidence="1">Homodimer.</text>
</comment>
<comment type="subcellular location">
    <subcellularLocation>
        <location evidence="1">Plastid</location>
        <location evidence="1">Chloroplast</location>
    </subcellularLocation>
</comment>
<comment type="induction">
    <text evidence="3">By drought, cold, high salinity and abscisic acid (ABA) treatments.</text>
</comment>
<comment type="similarity">
    <text evidence="4">Belongs to the 6-phosphogluconate dehydrogenase family.</text>
</comment>
<comment type="sequence caution" evidence="4">
    <conflict type="erroneous initiation">
        <sequence resource="EMBL-CDS" id="AAP33506"/>
    </conflict>
    <text>Truncated N-terminus.</text>
</comment>
<protein>
    <recommendedName>
        <fullName>6-phosphogluconate dehydrogenase, decarboxylating 2, chloroplastic</fullName>
        <shortName>OsG6PGH2</shortName>
        <ecNumber>1.1.1.44</ecNumber>
    </recommendedName>
</protein>
<sequence length="508" mass="54300">MASPAPAPPAASSSAAGSAPPPRIGLAGLATMGQNLALNIAEKGFPISVYNRTAAKVDATVSRAEAEGALPVLGHRDPRGFVLSLSRPRTVVLLVQAGRAVDATIDALVPYLDAGDAIVDGGNEWYQNTERRIEEAAARGILYLGMGVSGGEEGARNGPSLMPGGHIDAYNNIRDILEKAAAQTEDGACVTFVGPGGAGNFVKMVHNGIEYGDMQLIAEAYDVLRRVGGLSNSEIADVFAEWNRGELESFLVEITADIFTVADPLDGSGGGGLVDKILDKTGMKGTGKWTVQQAAELAIAAPTIAASLDGRYLSGLKDERVAAAGVLEAEGMPSGLLETINVDKKMLVDRVRQALYASKICSYAQGMNLLRAKSVEKGWNLNLAELARIWKGGCIIRAKFLDRIKKAYDRNPELANLIVDREFAREMVQRQNAWRWVVARAVEAGISTPGMSASLSYFDTYRCSRLPANLIQAQRDLFGAHTYERIDRPGSFHTEWTKLARKSNGAAI</sequence>
<reference key="1">
    <citation type="journal article" date="2005" name="BMC Biol.">
        <title>The sequence of rice chromosomes 11 and 12, rich in disease resistance genes and recent gene duplications.</title>
        <authorList>
            <consortium name="The rice chromosomes 11 and 12 sequencing consortia"/>
        </authorList>
    </citation>
    <scope>NUCLEOTIDE SEQUENCE [LARGE SCALE GENOMIC DNA]</scope>
    <source>
        <strain>cv. Nipponbare</strain>
    </source>
</reference>
<reference key="2">
    <citation type="journal article" date="2005" name="Nature">
        <title>The map-based sequence of the rice genome.</title>
        <authorList>
            <consortium name="International rice genome sequencing project (IRGSP)"/>
        </authorList>
    </citation>
    <scope>NUCLEOTIDE SEQUENCE [LARGE SCALE GENOMIC DNA]</scope>
    <source>
        <strain>cv. Nipponbare</strain>
    </source>
</reference>
<reference key="3">
    <citation type="journal article" date="2008" name="Nucleic Acids Res.">
        <title>The rice annotation project database (RAP-DB): 2008 update.</title>
        <authorList>
            <consortium name="The rice annotation project (RAP)"/>
        </authorList>
    </citation>
    <scope>GENOME REANNOTATION</scope>
    <source>
        <strain>cv. Nipponbare</strain>
    </source>
</reference>
<reference key="4">
    <citation type="journal article" date="2013" name="Rice">
        <title>Improvement of the Oryza sativa Nipponbare reference genome using next generation sequence and optical map data.</title>
        <authorList>
            <person name="Kawahara Y."/>
            <person name="de la Bastide M."/>
            <person name="Hamilton J.P."/>
            <person name="Kanamori H."/>
            <person name="McCombie W.R."/>
            <person name="Ouyang S."/>
            <person name="Schwartz D.C."/>
            <person name="Tanaka T."/>
            <person name="Wu J."/>
            <person name="Zhou S."/>
            <person name="Childs K.L."/>
            <person name="Davidson R.M."/>
            <person name="Lin H."/>
            <person name="Quesada-Ocampo L."/>
            <person name="Vaillancourt B."/>
            <person name="Sakai H."/>
            <person name="Lee S.S."/>
            <person name="Kim J."/>
            <person name="Numa H."/>
            <person name="Itoh T."/>
            <person name="Buell C.R."/>
            <person name="Matsumoto T."/>
        </authorList>
    </citation>
    <scope>GENOME REANNOTATION</scope>
    <source>
        <strain>cv. Nipponbare</strain>
    </source>
</reference>
<reference key="5">
    <citation type="journal article" date="2003" name="Science">
        <title>Collection, mapping, and annotation of over 28,000 cDNA clones from japonica rice.</title>
        <authorList>
            <consortium name="The rice full-length cDNA consortium"/>
        </authorList>
    </citation>
    <scope>NUCLEOTIDE SEQUENCE [LARGE SCALE MRNA]</scope>
    <source>
        <strain>cv. Nipponbare</strain>
    </source>
</reference>
<reference key="6">
    <citation type="journal article" date="2007" name="J. Integr. Plant Biol.">
        <title>The 6-phosphogluconate dehydrogenase genes are responsive to abiotic stresses in rice.</title>
        <authorList>
            <person name="Hou F.-Y."/>
            <person name="Huang J."/>
            <person name="Yu S.-L."/>
            <person name="Zhang H.-S."/>
        </authorList>
    </citation>
    <scope>NUCLEOTIDE SEQUENCE [MRNA] OF 30-508</scope>
    <scope>INDUCTION</scope>
    <source>
        <strain>cv. Jiu Caiqing</strain>
        <tissue>Leaf</tissue>
    </source>
</reference>
<evidence type="ECO:0000250" key="1"/>
<evidence type="ECO:0000255" key="2"/>
<evidence type="ECO:0000269" key="3">
    <source ref="6"/>
</evidence>
<evidence type="ECO:0000305" key="4"/>
<dbReference type="EC" id="1.1.1.44"/>
<dbReference type="EMBL" id="DP000010">
    <property type="protein sequence ID" value="ABA93694.1"/>
    <property type="molecule type" value="Genomic_DNA"/>
</dbReference>
<dbReference type="EMBL" id="AP008217">
    <property type="protein sequence ID" value="BAF28275.1"/>
    <property type="molecule type" value="Genomic_DNA"/>
</dbReference>
<dbReference type="EMBL" id="AP014967">
    <property type="protein sequence ID" value="BAT14060.1"/>
    <property type="molecule type" value="Genomic_DNA"/>
</dbReference>
<dbReference type="EMBL" id="AK071592">
    <property type="status" value="NOT_ANNOTATED_CDS"/>
    <property type="molecule type" value="mRNA"/>
</dbReference>
<dbReference type="EMBL" id="AY278362">
    <property type="protein sequence ID" value="AAP33506.2"/>
    <property type="status" value="ALT_INIT"/>
    <property type="molecule type" value="mRNA"/>
</dbReference>
<dbReference type="RefSeq" id="XP_015616899.1">
    <property type="nucleotide sequence ID" value="XM_015761413.1"/>
</dbReference>
<dbReference type="SMR" id="Q2R480"/>
<dbReference type="FunCoup" id="Q2R480">
    <property type="interactions" value="1817"/>
</dbReference>
<dbReference type="STRING" id="39947.Q2R480"/>
<dbReference type="PaxDb" id="39947-Q2R480"/>
<dbReference type="EnsemblPlants" id="Os11t0484500-01">
    <property type="protein sequence ID" value="Os11t0484500-01"/>
    <property type="gene ID" value="Os11g0484500"/>
</dbReference>
<dbReference type="Gramene" id="Os11t0484500-01">
    <property type="protein sequence ID" value="Os11t0484500-01"/>
    <property type="gene ID" value="Os11g0484500"/>
</dbReference>
<dbReference type="KEGG" id="dosa:Os11g0484500"/>
<dbReference type="eggNOG" id="KOG2653">
    <property type="taxonomic scope" value="Eukaryota"/>
</dbReference>
<dbReference type="HOGENOM" id="CLU_024540_4_2_1"/>
<dbReference type="InParanoid" id="Q2R480"/>
<dbReference type="OMA" id="QALYMGK"/>
<dbReference type="OrthoDB" id="434986at2759"/>
<dbReference type="UniPathway" id="UPA00115">
    <property type="reaction ID" value="UER00410"/>
</dbReference>
<dbReference type="Proteomes" id="UP000000763">
    <property type="component" value="Chromosome 11"/>
</dbReference>
<dbReference type="Proteomes" id="UP000059680">
    <property type="component" value="Chromosome 11"/>
</dbReference>
<dbReference type="ExpressionAtlas" id="Q2R480">
    <property type="expression patterns" value="baseline and differential"/>
</dbReference>
<dbReference type="GO" id="GO:0009507">
    <property type="term" value="C:chloroplast"/>
    <property type="evidence" value="ECO:0007669"/>
    <property type="project" value="UniProtKB-SubCell"/>
</dbReference>
<dbReference type="GO" id="GO:0005829">
    <property type="term" value="C:cytosol"/>
    <property type="evidence" value="ECO:0000318"/>
    <property type="project" value="GO_Central"/>
</dbReference>
<dbReference type="GO" id="GO:0050661">
    <property type="term" value="F:NADP binding"/>
    <property type="evidence" value="ECO:0000318"/>
    <property type="project" value="GO_Central"/>
</dbReference>
<dbReference type="GO" id="GO:0008114">
    <property type="term" value="F:phosphogluconate 2-dehydrogenase activity"/>
    <property type="evidence" value="ECO:0000318"/>
    <property type="project" value="GO_Central"/>
</dbReference>
<dbReference type="GO" id="GO:0004616">
    <property type="term" value="F:phosphogluconate dehydrogenase (decarboxylating) activity"/>
    <property type="evidence" value="ECO:0007669"/>
    <property type="project" value="UniProtKB-EC"/>
</dbReference>
<dbReference type="GO" id="GO:0019521">
    <property type="term" value="P:D-gluconate metabolic process"/>
    <property type="evidence" value="ECO:0007669"/>
    <property type="project" value="UniProtKB-KW"/>
</dbReference>
<dbReference type="GO" id="GO:0009051">
    <property type="term" value="P:pentose-phosphate shunt, oxidative branch"/>
    <property type="evidence" value="ECO:0000318"/>
    <property type="project" value="GO_Central"/>
</dbReference>
<dbReference type="GO" id="GO:0009737">
    <property type="term" value="P:response to abscisic acid"/>
    <property type="evidence" value="ECO:0000270"/>
    <property type="project" value="UniProtKB"/>
</dbReference>
<dbReference type="GO" id="GO:0009409">
    <property type="term" value="P:response to cold"/>
    <property type="evidence" value="ECO:0000270"/>
    <property type="project" value="UniProtKB"/>
</dbReference>
<dbReference type="GO" id="GO:0009651">
    <property type="term" value="P:response to salt stress"/>
    <property type="evidence" value="ECO:0000270"/>
    <property type="project" value="UniProtKB"/>
</dbReference>
<dbReference type="GO" id="GO:0009414">
    <property type="term" value="P:response to water deprivation"/>
    <property type="evidence" value="ECO:0000270"/>
    <property type="project" value="UniProtKB"/>
</dbReference>
<dbReference type="FunFam" id="1.10.1040.10:FF:000002">
    <property type="entry name" value="6-phosphogluconate dehydrogenase, decarboxylating"/>
    <property type="match status" value="1"/>
</dbReference>
<dbReference type="FunFam" id="1.20.5.320:FF:000001">
    <property type="entry name" value="6-phosphogluconate dehydrogenase, decarboxylating"/>
    <property type="match status" value="1"/>
</dbReference>
<dbReference type="FunFam" id="3.40.50.720:FF:000007">
    <property type="entry name" value="6-phosphogluconate dehydrogenase, decarboxylating"/>
    <property type="match status" value="1"/>
</dbReference>
<dbReference type="Gene3D" id="1.20.5.320">
    <property type="entry name" value="6-Phosphogluconate Dehydrogenase, domain 3"/>
    <property type="match status" value="1"/>
</dbReference>
<dbReference type="Gene3D" id="1.10.1040.10">
    <property type="entry name" value="N-(1-d-carboxylethyl)-l-norvaline Dehydrogenase, domain 2"/>
    <property type="match status" value="1"/>
</dbReference>
<dbReference type="Gene3D" id="3.40.50.720">
    <property type="entry name" value="NAD(P)-binding Rossmann-like Domain"/>
    <property type="match status" value="1"/>
</dbReference>
<dbReference type="InterPro" id="IPR008927">
    <property type="entry name" value="6-PGluconate_DH-like_C_sf"/>
</dbReference>
<dbReference type="InterPro" id="IPR013328">
    <property type="entry name" value="6PGD_dom2"/>
</dbReference>
<dbReference type="InterPro" id="IPR006114">
    <property type="entry name" value="6PGDH_C"/>
</dbReference>
<dbReference type="InterPro" id="IPR006113">
    <property type="entry name" value="6PGDH_Gnd/GntZ"/>
</dbReference>
<dbReference type="InterPro" id="IPR006115">
    <property type="entry name" value="6PGDH_NADP-bd"/>
</dbReference>
<dbReference type="InterPro" id="IPR036291">
    <property type="entry name" value="NAD(P)-bd_dom_sf"/>
</dbReference>
<dbReference type="InterPro" id="IPR006183">
    <property type="entry name" value="Pgluconate_DH"/>
</dbReference>
<dbReference type="NCBIfam" id="TIGR00873">
    <property type="entry name" value="gnd"/>
    <property type="match status" value="1"/>
</dbReference>
<dbReference type="NCBIfam" id="NF006765">
    <property type="entry name" value="PRK09287.1"/>
    <property type="match status" value="1"/>
</dbReference>
<dbReference type="PANTHER" id="PTHR11811">
    <property type="entry name" value="6-PHOSPHOGLUCONATE DEHYDROGENASE"/>
    <property type="match status" value="1"/>
</dbReference>
<dbReference type="Pfam" id="PF00393">
    <property type="entry name" value="6PGD"/>
    <property type="match status" value="1"/>
</dbReference>
<dbReference type="Pfam" id="PF03446">
    <property type="entry name" value="NAD_binding_2"/>
    <property type="match status" value="1"/>
</dbReference>
<dbReference type="PIRSF" id="PIRSF000109">
    <property type="entry name" value="6PGD"/>
    <property type="match status" value="1"/>
</dbReference>
<dbReference type="PRINTS" id="PR00076">
    <property type="entry name" value="6PGDHDRGNASE"/>
</dbReference>
<dbReference type="SMART" id="SM01350">
    <property type="entry name" value="6PGD"/>
    <property type="match status" value="1"/>
</dbReference>
<dbReference type="SUPFAM" id="SSF48179">
    <property type="entry name" value="6-phosphogluconate dehydrogenase C-terminal domain-like"/>
    <property type="match status" value="1"/>
</dbReference>
<dbReference type="SUPFAM" id="SSF51735">
    <property type="entry name" value="NAD(P)-binding Rossmann-fold domains"/>
    <property type="match status" value="1"/>
</dbReference>
<proteinExistence type="evidence at transcript level"/>